<evidence type="ECO:0000250" key="1"/>
<evidence type="ECO:0000250" key="2">
    <source>
        <dbReference type="UniProtKB" id="P70452"/>
    </source>
</evidence>
<evidence type="ECO:0000250" key="3">
    <source>
        <dbReference type="UniProtKB" id="Q08850"/>
    </source>
</evidence>
<evidence type="ECO:0000250" key="4">
    <source>
        <dbReference type="UniProtKB" id="Q12846"/>
    </source>
</evidence>
<evidence type="ECO:0000255" key="5"/>
<evidence type="ECO:0000255" key="6">
    <source>
        <dbReference type="PROSITE-ProRule" id="PRU00202"/>
    </source>
</evidence>
<evidence type="ECO:0000256" key="7">
    <source>
        <dbReference type="SAM" id="MobiDB-lite"/>
    </source>
</evidence>
<evidence type="ECO:0000305" key="8"/>
<reference key="1">
    <citation type="submission" date="2005-09" db="EMBL/GenBank/DDBJ databases">
        <authorList>
            <consortium name="NIH - Mammalian Gene Collection (MGC) project"/>
        </authorList>
    </citation>
    <scope>NUCLEOTIDE SEQUENCE [LARGE SCALE MRNA]</scope>
    <source>
        <strain>Hereford</strain>
        <tissue>Uterus</tissue>
    </source>
</reference>
<keyword id="KW-1003">Cell membrane</keyword>
<keyword id="KW-0966">Cell projection</keyword>
<keyword id="KW-0175">Coiled coil</keyword>
<keyword id="KW-1009">Hearing</keyword>
<keyword id="KW-0472">Membrane</keyword>
<keyword id="KW-0532">Neurotransmitter transport</keyword>
<keyword id="KW-0597">Phosphoprotein</keyword>
<keyword id="KW-1185">Reference proteome</keyword>
<keyword id="KW-0812">Transmembrane</keyword>
<keyword id="KW-1133">Transmembrane helix</keyword>
<keyword id="KW-0813">Transport</keyword>
<sequence>MRDRTHELRQGDDSSDDEDKERVALVVHPGTARLGSPDDEFFQKVRTIRQTIVKLENKVRELEKQQVTILATPLPEESMKQDLQNLRDEIKQLGRDIRAQLKAIEPQKEEADENYNSVNTRMRKTQHGVLSQQFVELINKCNLMQSEYREKNVERIRRQLKITNAGMVSDKELEQMLDSGQSEVFVSNILKDTQVTRQALNEISARHSEIQQLERSIRELHEIFTFLATEVEMQGEMINRIEKNILSSADYVERGQEHVKVALENQKKARKKKVFIAICLSITVLILVVIIVISTLV</sequence>
<organism>
    <name type="scientific">Bos taurus</name>
    <name type="common">Bovine</name>
    <dbReference type="NCBI Taxonomy" id="9913"/>
    <lineage>
        <taxon>Eukaryota</taxon>
        <taxon>Metazoa</taxon>
        <taxon>Chordata</taxon>
        <taxon>Craniata</taxon>
        <taxon>Vertebrata</taxon>
        <taxon>Euteleostomi</taxon>
        <taxon>Mammalia</taxon>
        <taxon>Eutheria</taxon>
        <taxon>Laurasiatheria</taxon>
        <taxon>Artiodactyla</taxon>
        <taxon>Ruminantia</taxon>
        <taxon>Pecora</taxon>
        <taxon>Bovidae</taxon>
        <taxon>Bovinae</taxon>
        <taxon>Bos</taxon>
    </lineage>
</organism>
<comment type="function">
    <text evidence="2 3 4">Plasma membrane t-SNARE that mediates docking of transport vesicles (By similarity). Necessary for the translocation of SLC2A4 from intracellular vesicles to the plasma membrane (By similarity). In neurons, recruited at neurite tips to membrane domains rich in the phospholipid 1-oleoyl-2-palmitoyl-PC (OPPC) which promotes neurite tip surface expression of the dopamine transporter SLC6A3/DAT by facilitating fusion of SLC6A3-containing transport vesicles with the plasma membrane (By similarity). Together with STXB3 and VAMP2, may also play a role in docking/fusion of intracellular GLUT4-containing vesicles with the cell surface in adipocytes and in docking of synaptic vesicles at presynaptic active zones (By similarity). Required for normal hearing (By similarity).</text>
</comment>
<comment type="subunit">
    <text evidence="1">Component of the SNARE complex composed of STX4, SNAP23 and VAMP7 that interacts with SYT7 during lysosomal exocytosis. Found in a complex with VAMP8 and SNAP23. Detected in a complex with SNAP23 and STXBP4. Interacts with VAMP2. Interacts with SNAP23 and SNAPIN. Interacts with LLGL1. Interacts (via C-terminus) with CENPF. Interacts with DOC2B. Interacts with STXBP6. Interacts with STXBP3; excludes interaction with DOC2B and SNAP25. Interacts with STXBP4; excludes interaction with VAMP2 (By similarity). Interacts with STXBP5L (By similarity).</text>
</comment>
<comment type="subcellular location">
    <subcellularLocation>
        <location evidence="3">Cell membrane</location>
        <topology evidence="8">Single-pass type IV membrane protein</topology>
    </subcellularLocation>
    <subcellularLocation>
        <location evidence="3">Cell projection</location>
        <location evidence="3">Neuron projection</location>
    </subcellularLocation>
    <subcellularLocation>
        <location evidence="2">Cell projection</location>
        <location evidence="2">Stereocilium</location>
    </subcellularLocation>
    <text evidence="3">Localizes to neurite tips in neuronal cells.</text>
</comment>
<comment type="similarity">
    <text evidence="8">Belongs to the syntaxin family.</text>
</comment>
<gene>
    <name type="primary">STX4</name>
</gene>
<feature type="chain" id="PRO_0000282875" description="Syntaxin-4">
    <location>
        <begin position="1"/>
        <end position="297"/>
    </location>
</feature>
<feature type="topological domain" description="Cytoplasmic" evidence="5">
    <location>
        <begin position="1"/>
        <end position="275"/>
    </location>
</feature>
<feature type="transmembrane region" description="Helical; Anchor for type IV membrane protein" evidence="5">
    <location>
        <begin position="276"/>
        <end position="296"/>
    </location>
</feature>
<feature type="topological domain" description="Extracellular" evidence="5">
    <location>
        <position position="297"/>
    </location>
</feature>
<feature type="domain" description="t-SNARE coiled-coil homology" evidence="6">
    <location>
        <begin position="200"/>
        <end position="262"/>
    </location>
</feature>
<feature type="region of interest" description="Disordered" evidence="7">
    <location>
        <begin position="1"/>
        <end position="21"/>
    </location>
</feature>
<feature type="coiled-coil region" evidence="5">
    <location>
        <begin position="43"/>
        <end position="163"/>
    </location>
</feature>
<feature type="compositionally biased region" description="Basic and acidic residues" evidence="7">
    <location>
        <begin position="1"/>
        <end position="12"/>
    </location>
</feature>
<feature type="site" description="Required for neurite tip localization" evidence="3">
    <location>
        <position position="290"/>
    </location>
</feature>
<feature type="modified residue" description="Phosphoserine" evidence="4">
    <location>
        <position position="14"/>
    </location>
</feature>
<feature type="modified residue" description="Phosphoserine" evidence="4">
    <location>
        <position position="15"/>
    </location>
</feature>
<feature type="modified residue" description="Phosphothreonine" evidence="4">
    <location>
        <position position="31"/>
    </location>
</feature>
<feature type="modified residue" description="Phosphoserine" evidence="4">
    <location>
        <position position="36"/>
    </location>
</feature>
<feature type="modified residue" description="Phosphoserine" evidence="4">
    <location>
        <position position="117"/>
    </location>
</feature>
<feature type="modified residue" description="Phosphoserine" evidence="2">
    <location>
        <position position="208"/>
    </location>
</feature>
<feature type="modified residue" description="Phosphoserine" evidence="2">
    <location>
        <position position="248"/>
    </location>
</feature>
<name>STX4_BOVIN</name>
<proteinExistence type="evidence at transcript level"/>
<protein>
    <recommendedName>
        <fullName>Syntaxin-4</fullName>
    </recommendedName>
</protein>
<dbReference type="EMBL" id="BC104588">
    <property type="protein sequence ID" value="AAI04589.1"/>
    <property type="molecule type" value="mRNA"/>
</dbReference>
<dbReference type="RefSeq" id="NP_001030236.1">
    <property type="nucleotide sequence ID" value="NM_001035064.1"/>
</dbReference>
<dbReference type="SMR" id="Q3SWZ3"/>
<dbReference type="FunCoup" id="Q3SWZ3">
    <property type="interactions" value="1019"/>
</dbReference>
<dbReference type="STRING" id="9913.ENSBTAP00000009899"/>
<dbReference type="PaxDb" id="9913-ENSBTAP00000009899"/>
<dbReference type="GeneID" id="508675"/>
<dbReference type="KEGG" id="bta:508675"/>
<dbReference type="CTD" id="6810"/>
<dbReference type="eggNOG" id="KOG0810">
    <property type="taxonomic scope" value="Eukaryota"/>
</dbReference>
<dbReference type="HOGENOM" id="CLU_042423_2_1_1"/>
<dbReference type="InParanoid" id="Q3SWZ3"/>
<dbReference type="OrthoDB" id="10255013at2759"/>
<dbReference type="TreeFam" id="TF313763"/>
<dbReference type="Proteomes" id="UP000009136">
    <property type="component" value="Unplaced"/>
</dbReference>
<dbReference type="GO" id="GO:0005901">
    <property type="term" value="C:caveola"/>
    <property type="evidence" value="ECO:0000314"/>
    <property type="project" value="AgBase"/>
</dbReference>
<dbReference type="GO" id="GO:0012505">
    <property type="term" value="C:endomembrane system"/>
    <property type="evidence" value="ECO:0000318"/>
    <property type="project" value="GO_Central"/>
</dbReference>
<dbReference type="GO" id="GO:0032589">
    <property type="term" value="C:neuron projection membrane"/>
    <property type="evidence" value="ECO:0000250"/>
    <property type="project" value="UniProtKB"/>
</dbReference>
<dbReference type="GO" id="GO:0005886">
    <property type="term" value="C:plasma membrane"/>
    <property type="evidence" value="ECO:0000318"/>
    <property type="project" value="GO_Central"/>
</dbReference>
<dbReference type="GO" id="GO:0031201">
    <property type="term" value="C:SNARE complex"/>
    <property type="evidence" value="ECO:0000250"/>
    <property type="project" value="UniProtKB"/>
</dbReference>
<dbReference type="GO" id="GO:0032420">
    <property type="term" value="C:stereocilium"/>
    <property type="evidence" value="ECO:0000250"/>
    <property type="project" value="UniProtKB"/>
</dbReference>
<dbReference type="GO" id="GO:0005484">
    <property type="term" value="F:SNAP receptor activity"/>
    <property type="evidence" value="ECO:0000318"/>
    <property type="project" value="GO_Central"/>
</dbReference>
<dbReference type="GO" id="GO:0000149">
    <property type="term" value="F:SNARE binding"/>
    <property type="evidence" value="ECO:0000318"/>
    <property type="project" value="GO_Central"/>
</dbReference>
<dbReference type="GO" id="GO:0006887">
    <property type="term" value="P:exocytosis"/>
    <property type="evidence" value="ECO:0000318"/>
    <property type="project" value="GO_Central"/>
</dbReference>
<dbReference type="GO" id="GO:0006886">
    <property type="term" value="P:intracellular protein transport"/>
    <property type="evidence" value="ECO:0000318"/>
    <property type="project" value="GO_Central"/>
</dbReference>
<dbReference type="GO" id="GO:0006836">
    <property type="term" value="P:neurotransmitter transport"/>
    <property type="evidence" value="ECO:0007669"/>
    <property type="project" value="UniProtKB-KW"/>
</dbReference>
<dbReference type="GO" id="GO:0034394">
    <property type="term" value="P:protein localization to cell surface"/>
    <property type="evidence" value="ECO:0000250"/>
    <property type="project" value="UniProtKB"/>
</dbReference>
<dbReference type="GO" id="GO:0007605">
    <property type="term" value="P:sensory perception of sound"/>
    <property type="evidence" value="ECO:0000250"/>
    <property type="project" value="UniProtKB"/>
</dbReference>
<dbReference type="GO" id="GO:0048278">
    <property type="term" value="P:vesicle docking"/>
    <property type="evidence" value="ECO:0000318"/>
    <property type="project" value="GO_Central"/>
</dbReference>
<dbReference type="GO" id="GO:0006906">
    <property type="term" value="P:vesicle fusion"/>
    <property type="evidence" value="ECO:0000318"/>
    <property type="project" value="GO_Central"/>
</dbReference>
<dbReference type="CDD" id="cd00179">
    <property type="entry name" value="SynN"/>
    <property type="match status" value="1"/>
</dbReference>
<dbReference type="FunFam" id="1.20.5.110:FF:000045">
    <property type="entry name" value="Syntaxin 4"/>
    <property type="match status" value="1"/>
</dbReference>
<dbReference type="FunFam" id="1.20.58.70:FF:000011">
    <property type="entry name" value="Syntaxin 4"/>
    <property type="match status" value="1"/>
</dbReference>
<dbReference type="Gene3D" id="1.20.5.110">
    <property type="match status" value="1"/>
</dbReference>
<dbReference type="Gene3D" id="1.20.58.70">
    <property type="match status" value="1"/>
</dbReference>
<dbReference type="InterPro" id="IPR010989">
    <property type="entry name" value="SNARE"/>
</dbReference>
<dbReference type="InterPro" id="IPR045242">
    <property type="entry name" value="Syntaxin"/>
</dbReference>
<dbReference type="InterPro" id="IPR006012">
    <property type="entry name" value="Syntaxin/epimorphin_CS"/>
</dbReference>
<dbReference type="InterPro" id="IPR006011">
    <property type="entry name" value="Syntaxin_N"/>
</dbReference>
<dbReference type="InterPro" id="IPR000727">
    <property type="entry name" value="T_SNARE_dom"/>
</dbReference>
<dbReference type="PANTHER" id="PTHR19957">
    <property type="entry name" value="SYNTAXIN"/>
    <property type="match status" value="1"/>
</dbReference>
<dbReference type="PANTHER" id="PTHR19957:SF97">
    <property type="entry name" value="SYNTAXIN-4"/>
    <property type="match status" value="1"/>
</dbReference>
<dbReference type="Pfam" id="PF05739">
    <property type="entry name" value="SNARE"/>
    <property type="match status" value="1"/>
</dbReference>
<dbReference type="Pfam" id="PF00804">
    <property type="entry name" value="Syntaxin"/>
    <property type="match status" value="1"/>
</dbReference>
<dbReference type="SMART" id="SM00503">
    <property type="entry name" value="SynN"/>
    <property type="match status" value="1"/>
</dbReference>
<dbReference type="SMART" id="SM00397">
    <property type="entry name" value="t_SNARE"/>
    <property type="match status" value="1"/>
</dbReference>
<dbReference type="SUPFAM" id="SSF47661">
    <property type="entry name" value="t-snare proteins"/>
    <property type="match status" value="1"/>
</dbReference>
<dbReference type="PROSITE" id="PS00914">
    <property type="entry name" value="SYNTAXIN"/>
    <property type="match status" value="1"/>
</dbReference>
<dbReference type="PROSITE" id="PS50192">
    <property type="entry name" value="T_SNARE"/>
    <property type="match status" value="1"/>
</dbReference>
<accession>Q3SWZ3</accession>